<keyword id="KW-0010">Activator</keyword>
<keyword id="KW-0067">ATP-binding</keyword>
<keyword id="KW-0238">DNA-binding</keyword>
<keyword id="KW-0347">Helicase</keyword>
<keyword id="KW-0378">Hydrolase</keyword>
<keyword id="KW-0547">Nucleotide-binding</keyword>
<keyword id="KW-0804">Transcription</keyword>
<keyword id="KW-0805">Transcription regulation</keyword>
<evidence type="ECO:0000255" key="1">
    <source>
        <dbReference type="HAMAP-Rule" id="MF_01821"/>
    </source>
</evidence>
<sequence>MSFALGQRWISDTESDLGLGTVVAVDDRTVSVLFAASEENRLYAKHDAPITRVTFNKGDTIESHEGWSLEVEDVIEDGGLLTYIGTRTDTDEVNVVLRETLLSHQIRFNKPQDKLFAGQIDRMDRFALRFRALQNQYEQHKNPMRGLCGMRAGLIPHQLFIAHEVGRRYAPRVLLADEVGLGKTIEAGMIIHQQVLSGRAERVLIVVPETLQHQWLVEMMRRFNLHFSIFDEERCIESYADSENPFDTAQLVLCSLDFIRRSKRRFEQVVEADWDLLVVDEAHHLEWNQTKPSRAYQVIEAIAEETAGVLLLTATPEQLGHESHFARLRLLDPDRFYDYDAFVEEERQYQPVADAVTALMSGDKLSNDAKNRIAELLSEQDVEPLFRIIESDGSEEQQSQVRQELVDNLMDRHGTGRVLFRNTRAAIKGFPQRNLNLMPMALPPQYATSMRVATMMGGRMSNEARAMKMLYPEEIFQEFEGDSATWWQFDPRVNWLLELLKENRNEKVLIIASRASTALQLEQALREREGIRGTVFHEGMSIIERDKAAAYFAQEEGGAQVLICSEIGSEGRNFQFANQLVMFDLPFNPDLLEQRIGRLDRIGQKRDIDIHVPYLQGTSQELLARWFDEGLNAFGETCPTGRAVYEKFSDTIIAILATGKSDGLEPLIEESAALNKELKAQLEQGRDRLLEVHSNGGNKAKELAEKIAATDGDIHLVNFALNLFDTIGLNQDDKGENAIVVTPAENMLVSSYPGLPYEGCTITFDRKTALSREDMNLISWEHPMIQGGIDLVLTEGVGATAVSLLKNKALPAGTLLLELIYVVDAQAPKKSGIGRFLPKTPIRLMMDSKGNDLSAQVEFESFNRQLSPVNRHMASKLVNSVQKEIHALIDTAEVSIEDRIEAVRVDANAEMKTALNGELDRLQALKAVNPNIRDEELTQIETQMSELSAYIGKAQVQLDSLRLIVVSHN</sequence>
<name>RAPA_ALISL</name>
<comment type="function">
    <text evidence="1">Transcription regulator that activates transcription by stimulating RNA polymerase (RNAP) recycling in case of stress conditions such as supercoiled DNA or high salt concentrations. Probably acts by releasing the RNAP, when it is trapped or immobilized on tightly supercoiled DNA. Does not activate transcription on linear DNA. Probably not involved in DNA repair.</text>
</comment>
<comment type="subunit">
    <text evidence="1">Interacts with the RNAP. Has a higher affinity for the core RNAP than for the holoenzyme. Its ATPase activity is stimulated by binding to RNAP.</text>
</comment>
<comment type="similarity">
    <text evidence="1">Belongs to the SNF2/RAD54 helicase family. RapA subfamily.</text>
</comment>
<organism>
    <name type="scientific">Aliivibrio salmonicida (strain LFI1238)</name>
    <name type="common">Vibrio salmonicida (strain LFI1238)</name>
    <dbReference type="NCBI Taxonomy" id="316275"/>
    <lineage>
        <taxon>Bacteria</taxon>
        <taxon>Pseudomonadati</taxon>
        <taxon>Pseudomonadota</taxon>
        <taxon>Gammaproteobacteria</taxon>
        <taxon>Vibrionales</taxon>
        <taxon>Vibrionaceae</taxon>
        <taxon>Aliivibrio</taxon>
    </lineage>
</organism>
<dbReference type="EC" id="3.6.4.-" evidence="1"/>
<dbReference type="EMBL" id="FM178379">
    <property type="protein sequence ID" value="CAQ78037.1"/>
    <property type="molecule type" value="Genomic_DNA"/>
</dbReference>
<dbReference type="RefSeq" id="WP_012549180.1">
    <property type="nucleotide sequence ID" value="NC_011312.1"/>
</dbReference>
<dbReference type="SMR" id="B6EPV7"/>
<dbReference type="KEGG" id="vsa:VSAL_I0352"/>
<dbReference type="eggNOG" id="COG0553">
    <property type="taxonomic scope" value="Bacteria"/>
</dbReference>
<dbReference type="HOGENOM" id="CLU_011520_0_0_6"/>
<dbReference type="Proteomes" id="UP000001730">
    <property type="component" value="Chromosome 1"/>
</dbReference>
<dbReference type="GO" id="GO:0005524">
    <property type="term" value="F:ATP binding"/>
    <property type="evidence" value="ECO:0007669"/>
    <property type="project" value="UniProtKB-UniRule"/>
</dbReference>
<dbReference type="GO" id="GO:0003677">
    <property type="term" value="F:DNA binding"/>
    <property type="evidence" value="ECO:0007669"/>
    <property type="project" value="UniProtKB-KW"/>
</dbReference>
<dbReference type="GO" id="GO:0004386">
    <property type="term" value="F:helicase activity"/>
    <property type="evidence" value="ECO:0007669"/>
    <property type="project" value="UniProtKB-UniRule"/>
</dbReference>
<dbReference type="GO" id="GO:0016817">
    <property type="term" value="F:hydrolase activity, acting on acid anhydrides"/>
    <property type="evidence" value="ECO:0007669"/>
    <property type="project" value="InterPro"/>
</dbReference>
<dbReference type="GO" id="GO:0006355">
    <property type="term" value="P:regulation of DNA-templated transcription"/>
    <property type="evidence" value="ECO:0007669"/>
    <property type="project" value="UniProtKB-UniRule"/>
</dbReference>
<dbReference type="CDD" id="cd18011">
    <property type="entry name" value="DEXDc_RapA"/>
    <property type="match status" value="1"/>
</dbReference>
<dbReference type="CDD" id="cd18793">
    <property type="entry name" value="SF2_C_SNF"/>
    <property type="match status" value="1"/>
</dbReference>
<dbReference type="Gene3D" id="2.30.30.140">
    <property type="match status" value="1"/>
</dbReference>
<dbReference type="Gene3D" id="2.30.30.930">
    <property type="match status" value="1"/>
</dbReference>
<dbReference type="Gene3D" id="3.30.360.80">
    <property type="match status" value="1"/>
</dbReference>
<dbReference type="Gene3D" id="6.10.140.1500">
    <property type="match status" value="1"/>
</dbReference>
<dbReference type="Gene3D" id="6.10.140.2230">
    <property type="match status" value="1"/>
</dbReference>
<dbReference type="Gene3D" id="3.40.50.300">
    <property type="entry name" value="P-loop containing nucleotide triphosphate hydrolases"/>
    <property type="match status" value="1"/>
</dbReference>
<dbReference type="Gene3D" id="3.40.50.10810">
    <property type="entry name" value="Tandem AAA-ATPase domain"/>
    <property type="match status" value="1"/>
</dbReference>
<dbReference type="HAMAP" id="MF_01821">
    <property type="entry name" value="Helicase_RapA"/>
    <property type="match status" value="1"/>
</dbReference>
<dbReference type="InterPro" id="IPR014001">
    <property type="entry name" value="Helicase_ATP-bd"/>
</dbReference>
<dbReference type="InterPro" id="IPR001650">
    <property type="entry name" value="Helicase_C-like"/>
</dbReference>
<dbReference type="InterPro" id="IPR023949">
    <property type="entry name" value="Helicase_RapA"/>
</dbReference>
<dbReference type="InterPro" id="IPR027417">
    <property type="entry name" value="P-loop_NTPase"/>
</dbReference>
<dbReference type="InterPro" id="IPR022737">
    <property type="entry name" value="RapA_C"/>
</dbReference>
<dbReference type="InterPro" id="IPR038718">
    <property type="entry name" value="SNF2-like_sf"/>
</dbReference>
<dbReference type="InterPro" id="IPR049730">
    <property type="entry name" value="SNF2/RAD54-like_C"/>
</dbReference>
<dbReference type="InterPro" id="IPR000330">
    <property type="entry name" value="SNF2_N"/>
</dbReference>
<dbReference type="InterPro" id="IPR040765">
    <property type="entry name" value="Tudor_1_RapA"/>
</dbReference>
<dbReference type="InterPro" id="IPR040766">
    <property type="entry name" value="Tudor_2_RapA"/>
</dbReference>
<dbReference type="NCBIfam" id="NF003426">
    <property type="entry name" value="PRK04914.1"/>
    <property type="match status" value="1"/>
</dbReference>
<dbReference type="PANTHER" id="PTHR45766">
    <property type="entry name" value="DNA ANNEALING HELICASE AND ENDONUCLEASE ZRANB3 FAMILY MEMBER"/>
    <property type="match status" value="1"/>
</dbReference>
<dbReference type="PANTHER" id="PTHR45766:SF6">
    <property type="entry name" value="SWI_SNF-RELATED MATRIX-ASSOCIATED ACTIN-DEPENDENT REGULATOR OF CHROMATIN SUBFAMILY A-LIKE PROTEIN 1"/>
    <property type="match status" value="1"/>
</dbReference>
<dbReference type="Pfam" id="PF00271">
    <property type="entry name" value="Helicase_C"/>
    <property type="match status" value="1"/>
</dbReference>
<dbReference type="Pfam" id="PF12137">
    <property type="entry name" value="RapA_C"/>
    <property type="match status" value="1"/>
</dbReference>
<dbReference type="Pfam" id="PF00176">
    <property type="entry name" value="SNF2-rel_dom"/>
    <property type="match status" value="1"/>
</dbReference>
<dbReference type="Pfam" id="PF18339">
    <property type="entry name" value="Tudor_1_RapA"/>
    <property type="match status" value="1"/>
</dbReference>
<dbReference type="Pfam" id="PF18337">
    <property type="entry name" value="Tudor_RapA"/>
    <property type="match status" value="1"/>
</dbReference>
<dbReference type="SMART" id="SM00487">
    <property type="entry name" value="DEXDc"/>
    <property type="match status" value="1"/>
</dbReference>
<dbReference type="SMART" id="SM00490">
    <property type="entry name" value="HELICc"/>
    <property type="match status" value="1"/>
</dbReference>
<dbReference type="SUPFAM" id="SSF52540">
    <property type="entry name" value="P-loop containing nucleoside triphosphate hydrolases"/>
    <property type="match status" value="2"/>
</dbReference>
<dbReference type="PROSITE" id="PS51192">
    <property type="entry name" value="HELICASE_ATP_BIND_1"/>
    <property type="match status" value="1"/>
</dbReference>
<dbReference type="PROSITE" id="PS51194">
    <property type="entry name" value="HELICASE_CTER"/>
    <property type="match status" value="1"/>
</dbReference>
<accession>B6EPV7</accession>
<proteinExistence type="inferred from homology"/>
<reference key="1">
    <citation type="journal article" date="2008" name="BMC Genomics">
        <title>The genome sequence of the fish pathogen Aliivibrio salmonicida strain LFI1238 shows extensive evidence of gene decay.</title>
        <authorList>
            <person name="Hjerde E."/>
            <person name="Lorentzen M.S."/>
            <person name="Holden M.T."/>
            <person name="Seeger K."/>
            <person name="Paulsen S."/>
            <person name="Bason N."/>
            <person name="Churcher C."/>
            <person name="Harris D."/>
            <person name="Norbertczak H."/>
            <person name="Quail M.A."/>
            <person name="Sanders S."/>
            <person name="Thurston S."/>
            <person name="Parkhill J."/>
            <person name="Willassen N.P."/>
            <person name="Thomson N.R."/>
        </authorList>
    </citation>
    <scope>NUCLEOTIDE SEQUENCE [LARGE SCALE GENOMIC DNA]</scope>
    <source>
        <strain>LFI1238</strain>
    </source>
</reference>
<protein>
    <recommendedName>
        <fullName evidence="1">RNA polymerase-associated protein RapA</fullName>
        <ecNumber evidence="1">3.6.4.-</ecNumber>
    </recommendedName>
    <alternativeName>
        <fullName evidence="1">ATP-dependent helicase HepA</fullName>
    </alternativeName>
</protein>
<gene>
    <name evidence="1" type="primary">rapA</name>
    <name type="ordered locus">VSAL_I0352</name>
</gene>
<feature type="chain" id="PRO_1000188167" description="RNA polymerase-associated protein RapA">
    <location>
        <begin position="1"/>
        <end position="969"/>
    </location>
</feature>
<feature type="domain" description="Helicase ATP-binding" evidence="1">
    <location>
        <begin position="164"/>
        <end position="334"/>
    </location>
</feature>
<feature type="domain" description="Helicase C-terminal" evidence="1">
    <location>
        <begin position="492"/>
        <end position="672"/>
    </location>
</feature>
<feature type="short sequence motif" description="DEAH box">
    <location>
        <begin position="280"/>
        <end position="283"/>
    </location>
</feature>
<feature type="binding site" evidence="1">
    <location>
        <begin position="177"/>
        <end position="184"/>
    </location>
    <ligand>
        <name>ATP</name>
        <dbReference type="ChEBI" id="CHEBI:30616"/>
    </ligand>
</feature>